<accession>O34892</accession>
<accession>Q796D6</accession>
<dbReference type="EMBL" id="AF027868">
    <property type="protein sequence ID" value="AAB84469.1"/>
    <property type="molecule type" value="Genomic_DNA"/>
</dbReference>
<dbReference type="EMBL" id="AL009126">
    <property type="protein sequence ID" value="CAB13799.1"/>
    <property type="molecule type" value="Genomic_DNA"/>
</dbReference>
<dbReference type="PIR" id="A69900">
    <property type="entry name" value="A69900"/>
</dbReference>
<dbReference type="RefSeq" id="NP_389788.1">
    <property type="nucleotide sequence ID" value="NC_000964.3"/>
</dbReference>
<dbReference type="RefSeq" id="WP_004399277.1">
    <property type="nucleotide sequence ID" value="NZ_OZ025638.1"/>
</dbReference>
<dbReference type="SMR" id="O34892"/>
<dbReference type="FunCoup" id="O34892">
    <property type="interactions" value="23"/>
</dbReference>
<dbReference type="STRING" id="224308.BSU19070"/>
<dbReference type="PaxDb" id="224308-BSU19070"/>
<dbReference type="EnsemblBacteria" id="CAB13799">
    <property type="protein sequence ID" value="CAB13799"/>
    <property type="gene ID" value="BSU_19070"/>
</dbReference>
<dbReference type="GeneID" id="939639"/>
<dbReference type="KEGG" id="bsu:BSU19070"/>
<dbReference type="PATRIC" id="fig|224308.179.peg.2085"/>
<dbReference type="eggNOG" id="COG1309">
    <property type="taxonomic scope" value="Bacteria"/>
</dbReference>
<dbReference type="InParanoid" id="O34892"/>
<dbReference type="OrthoDB" id="71867at2"/>
<dbReference type="PhylomeDB" id="O34892"/>
<dbReference type="BioCyc" id="BSUB:BSU19070-MONOMER"/>
<dbReference type="Proteomes" id="UP000001570">
    <property type="component" value="Chromosome"/>
</dbReference>
<dbReference type="GO" id="GO:0003677">
    <property type="term" value="F:DNA binding"/>
    <property type="evidence" value="ECO:0007669"/>
    <property type="project" value="UniProtKB-KW"/>
</dbReference>
<dbReference type="Gene3D" id="1.10.10.60">
    <property type="entry name" value="Homeodomain-like"/>
    <property type="match status" value="1"/>
</dbReference>
<dbReference type="Gene3D" id="1.10.357.10">
    <property type="entry name" value="Tetracycline Repressor, domain 2"/>
    <property type="match status" value="1"/>
</dbReference>
<dbReference type="InterPro" id="IPR009057">
    <property type="entry name" value="Homeodomain-like_sf"/>
</dbReference>
<dbReference type="InterPro" id="IPR001647">
    <property type="entry name" value="HTH_TetR"/>
</dbReference>
<dbReference type="InterPro" id="IPR025996">
    <property type="entry name" value="MT1864/Rv1816-like_C"/>
</dbReference>
<dbReference type="InterPro" id="IPR036271">
    <property type="entry name" value="Tet_transcr_reg_TetR-rel_C_sf"/>
</dbReference>
<dbReference type="Pfam" id="PF13305">
    <property type="entry name" value="TetR_C_33"/>
    <property type="match status" value="1"/>
</dbReference>
<dbReference type="SUPFAM" id="SSF46689">
    <property type="entry name" value="Homeodomain-like"/>
    <property type="match status" value="1"/>
</dbReference>
<dbReference type="SUPFAM" id="SSF48498">
    <property type="entry name" value="Tetracyclin repressor-like, C-terminal domain"/>
    <property type="match status" value="1"/>
</dbReference>
<dbReference type="PROSITE" id="PS50977">
    <property type="entry name" value="HTH_TETR_2"/>
    <property type="match status" value="1"/>
</dbReference>
<proteinExistence type="predicted"/>
<protein>
    <recommendedName>
        <fullName>Uncharacterized HTH-type transcriptional regulator YobS</fullName>
    </recommendedName>
</protein>
<gene>
    <name type="primary">yobS</name>
    <name type="ordered locus">BSU19070</name>
</gene>
<organism>
    <name type="scientific">Bacillus subtilis (strain 168)</name>
    <dbReference type="NCBI Taxonomy" id="224308"/>
    <lineage>
        <taxon>Bacteria</taxon>
        <taxon>Bacillati</taxon>
        <taxon>Bacillota</taxon>
        <taxon>Bacilli</taxon>
        <taxon>Bacillales</taxon>
        <taxon>Bacillaceae</taxon>
        <taxon>Bacillus</taxon>
    </lineage>
</organism>
<name>YOBS_BACSU</name>
<feature type="chain" id="PRO_0000360711" description="Uncharacterized HTH-type transcriptional regulator YobS">
    <location>
        <begin position="1"/>
        <end position="191"/>
    </location>
</feature>
<feature type="domain" description="HTH tetR-type" evidence="1">
    <location>
        <begin position="6"/>
        <end position="66"/>
    </location>
</feature>
<feature type="DNA-binding region" description="H-T-H motif" evidence="1">
    <location>
        <begin position="29"/>
        <end position="48"/>
    </location>
</feature>
<keyword id="KW-0238">DNA-binding</keyword>
<keyword id="KW-1185">Reference proteome</keyword>
<keyword id="KW-0678">Repressor</keyword>
<keyword id="KW-0804">Transcription</keyword>
<keyword id="KW-0805">Transcription regulation</keyword>
<evidence type="ECO:0000255" key="1">
    <source>
        <dbReference type="PROSITE-ProRule" id="PRU00335"/>
    </source>
</evidence>
<reference key="1">
    <citation type="submission" date="1997-10" db="EMBL/GenBank/DDBJ databases">
        <title>Sequence analysis of the Bacillus subtilis chromosome region between the terC and odhAB loci cloned in a yeast artificial chromosome.</title>
        <authorList>
            <person name="Lapidus A."/>
            <person name="Galleron N."/>
            <person name="Sorokin A."/>
            <person name="Ehrlich S.D."/>
        </authorList>
    </citation>
    <scope>NUCLEOTIDE SEQUENCE [GENOMIC DNA]</scope>
</reference>
<reference key="2">
    <citation type="journal article" date="1997" name="Nature">
        <title>The complete genome sequence of the Gram-positive bacterium Bacillus subtilis.</title>
        <authorList>
            <person name="Kunst F."/>
            <person name="Ogasawara N."/>
            <person name="Moszer I."/>
            <person name="Albertini A.M."/>
            <person name="Alloni G."/>
            <person name="Azevedo V."/>
            <person name="Bertero M.G."/>
            <person name="Bessieres P."/>
            <person name="Bolotin A."/>
            <person name="Borchert S."/>
            <person name="Borriss R."/>
            <person name="Boursier L."/>
            <person name="Brans A."/>
            <person name="Braun M."/>
            <person name="Brignell S.C."/>
            <person name="Bron S."/>
            <person name="Brouillet S."/>
            <person name="Bruschi C.V."/>
            <person name="Caldwell B."/>
            <person name="Capuano V."/>
            <person name="Carter N.M."/>
            <person name="Choi S.-K."/>
            <person name="Codani J.-J."/>
            <person name="Connerton I.F."/>
            <person name="Cummings N.J."/>
            <person name="Daniel R.A."/>
            <person name="Denizot F."/>
            <person name="Devine K.M."/>
            <person name="Duesterhoeft A."/>
            <person name="Ehrlich S.D."/>
            <person name="Emmerson P.T."/>
            <person name="Entian K.-D."/>
            <person name="Errington J."/>
            <person name="Fabret C."/>
            <person name="Ferrari E."/>
            <person name="Foulger D."/>
            <person name="Fritz C."/>
            <person name="Fujita M."/>
            <person name="Fujita Y."/>
            <person name="Fuma S."/>
            <person name="Galizzi A."/>
            <person name="Galleron N."/>
            <person name="Ghim S.-Y."/>
            <person name="Glaser P."/>
            <person name="Goffeau A."/>
            <person name="Golightly E.J."/>
            <person name="Grandi G."/>
            <person name="Guiseppi G."/>
            <person name="Guy B.J."/>
            <person name="Haga K."/>
            <person name="Haiech J."/>
            <person name="Harwood C.R."/>
            <person name="Henaut A."/>
            <person name="Hilbert H."/>
            <person name="Holsappel S."/>
            <person name="Hosono S."/>
            <person name="Hullo M.-F."/>
            <person name="Itaya M."/>
            <person name="Jones L.-M."/>
            <person name="Joris B."/>
            <person name="Karamata D."/>
            <person name="Kasahara Y."/>
            <person name="Klaerr-Blanchard M."/>
            <person name="Klein C."/>
            <person name="Kobayashi Y."/>
            <person name="Koetter P."/>
            <person name="Koningstein G."/>
            <person name="Krogh S."/>
            <person name="Kumano M."/>
            <person name="Kurita K."/>
            <person name="Lapidus A."/>
            <person name="Lardinois S."/>
            <person name="Lauber J."/>
            <person name="Lazarevic V."/>
            <person name="Lee S.-M."/>
            <person name="Levine A."/>
            <person name="Liu H."/>
            <person name="Masuda S."/>
            <person name="Mauel C."/>
            <person name="Medigue C."/>
            <person name="Medina N."/>
            <person name="Mellado R.P."/>
            <person name="Mizuno M."/>
            <person name="Moestl D."/>
            <person name="Nakai S."/>
            <person name="Noback M."/>
            <person name="Noone D."/>
            <person name="O'Reilly M."/>
            <person name="Ogawa K."/>
            <person name="Ogiwara A."/>
            <person name="Oudega B."/>
            <person name="Park S.-H."/>
            <person name="Parro V."/>
            <person name="Pohl T.M."/>
            <person name="Portetelle D."/>
            <person name="Porwollik S."/>
            <person name="Prescott A.M."/>
            <person name="Presecan E."/>
            <person name="Pujic P."/>
            <person name="Purnelle B."/>
            <person name="Rapoport G."/>
            <person name="Rey M."/>
            <person name="Reynolds S."/>
            <person name="Rieger M."/>
            <person name="Rivolta C."/>
            <person name="Rocha E."/>
            <person name="Roche B."/>
            <person name="Rose M."/>
            <person name="Sadaie Y."/>
            <person name="Sato T."/>
            <person name="Scanlan E."/>
            <person name="Schleich S."/>
            <person name="Schroeter R."/>
            <person name="Scoffone F."/>
            <person name="Sekiguchi J."/>
            <person name="Sekowska A."/>
            <person name="Seror S.J."/>
            <person name="Serror P."/>
            <person name="Shin B.-S."/>
            <person name="Soldo B."/>
            <person name="Sorokin A."/>
            <person name="Tacconi E."/>
            <person name="Takagi T."/>
            <person name="Takahashi H."/>
            <person name="Takemaru K."/>
            <person name="Takeuchi M."/>
            <person name="Tamakoshi A."/>
            <person name="Tanaka T."/>
            <person name="Terpstra P."/>
            <person name="Tognoni A."/>
            <person name="Tosato V."/>
            <person name="Uchiyama S."/>
            <person name="Vandenbol M."/>
            <person name="Vannier F."/>
            <person name="Vassarotti A."/>
            <person name="Viari A."/>
            <person name="Wambutt R."/>
            <person name="Wedler E."/>
            <person name="Wedler H."/>
            <person name="Weitzenegger T."/>
            <person name="Winters P."/>
            <person name="Wipat A."/>
            <person name="Yamamoto H."/>
            <person name="Yamane K."/>
            <person name="Yasumoto K."/>
            <person name="Yata K."/>
            <person name="Yoshida K."/>
            <person name="Yoshikawa H.-F."/>
            <person name="Zumstein E."/>
            <person name="Yoshikawa H."/>
            <person name="Danchin A."/>
        </authorList>
    </citation>
    <scope>NUCLEOTIDE SEQUENCE [LARGE SCALE GENOMIC DNA]</scope>
    <source>
        <strain>168</strain>
    </source>
</reference>
<reference key="3">
    <citation type="journal article" date="2005" name="Microbiol. Mol. Biol. Rev.">
        <title>The TetR family of transcriptional repressors.</title>
        <authorList>
            <person name="Ramos J.L."/>
            <person name="Martinez-Bueno M."/>
            <person name="Molina-Henares A.J."/>
            <person name="Teran W."/>
            <person name="Watanabe K."/>
            <person name="Zhang X."/>
            <person name="Gallegos M.T."/>
            <person name="Brennan R."/>
            <person name="Tobes R."/>
        </authorList>
    </citation>
    <scope>REVIEW</scope>
    <scope>GENE FAMILY</scope>
</reference>
<sequence length="191" mass="21016">MSPRIGLTQKMIVDAAAEIADQEGVNGVSLAALSKKMNVRPPSLYNHINGLQAIRAELAVRGLTKLFDQMADSVTERKGDSAMLSLAHAYVDFAIENPGYYEAALLKVHDKRTEIVSDQIVCLVTKLLIENGYASEKTAIHATRGLRSLLHGFTVLIAKEAFEREEDILESLSFSIRTFLSGLLINNKNIM</sequence>